<gene>
    <name evidence="1" type="primary">rpmE</name>
    <name type="ordered locus">Mmcs_3888</name>
</gene>
<accession>Q1B541</accession>
<keyword id="KW-0479">Metal-binding</keyword>
<keyword id="KW-0687">Ribonucleoprotein</keyword>
<keyword id="KW-0689">Ribosomal protein</keyword>
<keyword id="KW-0694">RNA-binding</keyword>
<keyword id="KW-0699">rRNA-binding</keyword>
<keyword id="KW-0862">Zinc</keyword>
<dbReference type="EMBL" id="CP000384">
    <property type="protein sequence ID" value="ABG09993.1"/>
    <property type="molecule type" value="Genomic_DNA"/>
</dbReference>
<dbReference type="SMR" id="Q1B541"/>
<dbReference type="KEGG" id="mmc:Mmcs_3888"/>
<dbReference type="HOGENOM" id="CLU_114306_4_3_11"/>
<dbReference type="BioCyc" id="MSP164756:G1G6O-3972-MONOMER"/>
<dbReference type="GO" id="GO:1990904">
    <property type="term" value="C:ribonucleoprotein complex"/>
    <property type="evidence" value="ECO:0007669"/>
    <property type="project" value="UniProtKB-KW"/>
</dbReference>
<dbReference type="GO" id="GO:0005840">
    <property type="term" value="C:ribosome"/>
    <property type="evidence" value="ECO:0007669"/>
    <property type="project" value="UniProtKB-KW"/>
</dbReference>
<dbReference type="GO" id="GO:0046872">
    <property type="term" value="F:metal ion binding"/>
    <property type="evidence" value="ECO:0007669"/>
    <property type="project" value="UniProtKB-KW"/>
</dbReference>
<dbReference type="GO" id="GO:0019843">
    <property type="term" value="F:rRNA binding"/>
    <property type="evidence" value="ECO:0007669"/>
    <property type="project" value="UniProtKB-KW"/>
</dbReference>
<dbReference type="GO" id="GO:0003735">
    <property type="term" value="F:structural constituent of ribosome"/>
    <property type="evidence" value="ECO:0007669"/>
    <property type="project" value="InterPro"/>
</dbReference>
<dbReference type="GO" id="GO:0006412">
    <property type="term" value="P:translation"/>
    <property type="evidence" value="ECO:0007669"/>
    <property type="project" value="UniProtKB-UniRule"/>
</dbReference>
<dbReference type="Gene3D" id="4.10.830.30">
    <property type="entry name" value="Ribosomal protein L31"/>
    <property type="match status" value="1"/>
</dbReference>
<dbReference type="HAMAP" id="MF_00501">
    <property type="entry name" value="Ribosomal_bL31_1"/>
    <property type="match status" value="1"/>
</dbReference>
<dbReference type="InterPro" id="IPR034704">
    <property type="entry name" value="Ribosomal_bL28/bL31-like_sf"/>
</dbReference>
<dbReference type="InterPro" id="IPR002150">
    <property type="entry name" value="Ribosomal_bL31"/>
</dbReference>
<dbReference type="InterPro" id="IPR027491">
    <property type="entry name" value="Ribosomal_bL31_A"/>
</dbReference>
<dbReference type="InterPro" id="IPR042105">
    <property type="entry name" value="Ribosomal_bL31_sf"/>
</dbReference>
<dbReference type="NCBIfam" id="TIGR00105">
    <property type="entry name" value="L31"/>
    <property type="match status" value="1"/>
</dbReference>
<dbReference type="NCBIfam" id="NF000612">
    <property type="entry name" value="PRK00019.1"/>
    <property type="match status" value="1"/>
</dbReference>
<dbReference type="NCBIfam" id="NF001809">
    <property type="entry name" value="PRK00528.1"/>
    <property type="match status" value="1"/>
</dbReference>
<dbReference type="PANTHER" id="PTHR33280">
    <property type="entry name" value="50S RIBOSOMAL PROTEIN L31, CHLOROPLASTIC"/>
    <property type="match status" value="1"/>
</dbReference>
<dbReference type="PANTHER" id="PTHR33280:SF1">
    <property type="entry name" value="LARGE RIBOSOMAL SUBUNIT PROTEIN BL31C"/>
    <property type="match status" value="1"/>
</dbReference>
<dbReference type="Pfam" id="PF01197">
    <property type="entry name" value="Ribosomal_L31"/>
    <property type="match status" value="1"/>
</dbReference>
<dbReference type="PRINTS" id="PR01249">
    <property type="entry name" value="RIBOSOMALL31"/>
</dbReference>
<dbReference type="SUPFAM" id="SSF143800">
    <property type="entry name" value="L28p-like"/>
    <property type="match status" value="1"/>
</dbReference>
<dbReference type="PROSITE" id="PS01143">
    <property type="entry name" value="RIBOSOMAL_L31"/>
    <property type="match status" value="1"/>
</dbReference>
<sequence length="81" mass="8860">MKTGIHPDYVETTVQCGCGNTFTTRSTKKTGNIVVEVCSQCHPFYTGKQKILDSGGRVARFEKRYGKRGANKAANTDSADK</sequence>
<comment type="function">
    <text evidence="1">Binds the 23S rRNA.</text>
</comment>
<comment type="cofactor">
    <cofactor evidence="1">
        <name>Zn(2+)</name>
        <dbReference type="ChEBI" id="CHEBI:29105"/>
    </cofactor>
    <text evidence="1">Binds 1 zinc ion per subunit.</text>
</comment>
<comment type="subunit">
    <text evidence="1">Part of the 50S ribosomal subunit.</text>
</comment>
<comment type="similarity">
    <text evidence="1">Belongs to the bacterial ribosomal protein bL31 family. Type A subfamily.</text>
</comment>
<evidence type="ECO:0000255" key="1">
    <source>
        <dbReference type="HAMAP-Rule" id="MF_00501"/>
    </source>
</evidence>
<evidence type="ECO:0000305" key="2"/>
<organism>
    <name type="scientific">Mycobacterium sp. (strain MCS)</name>
    <dbReference type="NCBI Taxonomy" id="164756"/>
    <lineage>
        <taxon>Bacteria</taxon>
        <taxon>Bacillati</taxon>
        <taxon>Actinomycetota</taxon>
        <taxon>Actinomycetes</taxon>
        <taxon>Mycobacteriales</taxon>
        <taxon>Mycobacteriaceae</taxon>
        <taxon>Mycobacterium</taxon>
    </lineage>
</organism>
<name>RL31_MYCSS</name>
<feature type="chain" id="PRO_1000126669" description="Large ribosomal subunit protein bL31">
    <location>
        <begin position="1"/>
        <end position="81"/>
    </location>
</feature>
<feature type="binding site" evidence="1">
    <location>
        <position position="16"/>
    </location>
    <ligand>
        <name>Zn(2+)</name>
        <dbReference type="ChEBI" id="CHEBI:29105"/>
    </ligand>
</feature>
<feature type="binding site" evidence="1">
    <location>
        <position position="18"/>
    </location>
    <ligand>
        <name>Zn(2+)</name>
        <dbReference type="ChEBI" id="CHEBI:29105"/>
    </ligand>
</feature>
<feature type="binding site" evidence="1">
    <location>
        <position position="38"/>
    </location>
    <ligand>
        <name>Zn(2+)</name>
        <dbReference type="ChEBI" id="CHEBI:29105"/>
    </ligand>
</feature>
<feature type="binding site" evidence="1">
    <location>
        <position position="41"/>
    </location>
    <ligand>
        <name>Zn(2+)</name>
        <dbReference type="ChEBI" id="CHEBI:29105"/>
    </ligand>
</feature>
<protein>
    <recommendedName>
        <fullName evidence="1">Large ribosomal subunit protein bL31</fullName>
    </recommendedName>
    <alternativeName>
        <fullName evidence="2">50S ribosomal protein L31</fullName>
    </alternativeName>
</protein>
<reference key="1">
    <citation type="submission" date="2006-06" db="EMBL/GenBank/DDBJ databases">
        <title>Complete sequence of chromosome of Mycobacterium sp. MCS.</title>
        <authorList>
            <consortium name="US DOE Joint Genome Institute"/>
            <person name="Copeland A."/>
            <person name="Lucas S."/>
            <person name="Lapidus A."/>
            <person name="Barry K."/>
            <person name="Detter J.C."/>
            <person name="Glavina del Rio T."/>
            <person name="Hammon N."/>
            <person name="Israni S."/>
            <person name="Dalin E."/>
            <person name="Tice H."/>
            <person name="Pitluck S."/>
            <person name="Martinez M."/>
            <person name="Schmutz J."/>
            <person name="Larimer F."/>
            <person name="Land M."/>
            <person name="Hauser L."/>
            <person name="Kyrpides N."/>
            <person name="Kim E."/>
            <person name="Miller C.D."/>
            <person name="Hughes J.E."/>
            <person name="Anderson A.J."/>
            <person name="Sims R.C."/>
            <person name="Richardson P."/>
        </authorList>
    </citation>
    <scope>NUCLEOTIDE SEQUENCE [LARGE SCALE GENOMIC DNA]</scope>
    <source>
        <strain>MCS</strain>
    </source>
</reference>
<proteinExistence type="inferred from homology"/>